<protein>
    <recommendedName>
        <fullName evidence="1">HTH-type transcriptional regulator MalT</fullName>
    </recommendedName>
    <alternativeName>
        <fullName evidence="1">ATP-dependent transcriptional activator MalT</fullName>
    </alternativeName>
</protein>
<keyword id="KW-0010">Activator</keyword>
<keyword id="KW-0067">ATP-binding</keyword>
<keyword id="KW-0119">Carbohydrate metabolism</keyword>
<keyword id="KW-0238">DNA-binding</keyword>
<keyword id="KW-0547">Nucleotide-binding</keyword>
<keyword id="KW-0804">Transcription</keyword>
<keyword id="KW-0805">Transcription regulation</keyword>
<name>MALT_ECOLC</name>
<gene>
    <name evidence="1" type="primary">malT</name>
    <name type="ordered locus">EcolC_0295</name>
</gene>
<feature type="chain" id="PRO_1000085769" description="HTH-type transcriptional regulator MalT">
    <location>
        <begin position="1"/>
        <end position="901"/>
    </location>
</feature>
<feature type="domain" description="HTH luxR-type" evidence="1">
    <location>
        <begin position="829"/>
        <end position="894"/>
    </location>
</feature>
<feature type="DNA-binding region" description="H-T-H motif" evidence="1">
    <location>
        <begin position="853"/>
        <end position="872"/>
    </location>
</feature>
<feature type="binding site" evidence="1">
    <location>
        <begin position="39"/>
        <end position="46"/>
    </location>
    <ligand>
        <name>ATP</name>
        <dbReference type="ChEBI" id="CHEBI:30616"/>
    </ligand>
</feature>
<organism>
    <name type="scientific">Escherichia coli (strain ATCC 8739 / DSM 1576 / NBRC 3972 / NCIMB 8545 / WDCM 00012 / Crooks)</name>
    <dbReference type="NCBI Taxonomy" id="481805"/>
    <lineage>
        <taxon>Bacteria</taxon>
        <taxon>Pseudomonadati</taxon>
        <taxon>Pseudomonadota</taxon>
        <taxon>Gammaproteobacteria</taxon>
        <taxon>Enterobacterales</taxon>
        <taxon>Enterobacteriaceae</taxon>
        <taxon>Escherichia</taxon>
    </lineage>
</organism>
<dbReference type="EMBL" id="CP000946">
    <property type="protein sequence ID" value="ACA75973.1"/>
    <property type="molecule type" value="Genomic_DNA"/>
</dbReference>
<dbReference type="RefSeq" id="WP_000906956.1">
    <property type="nucleotide sequence ID" value="NC_010468.1"/>
</dbReference>
<dbReference type="SMR" id="B1IP47"/>
<dbReference type="KEGG" id="ecl:EcolC_0295"/>
<dbReference type="HOGENOM" id="CLU_006325_3_0_6"/>
<dbReference type="GO" id="GO:0005524">
    <property type="term" value="F:ATP binding"/>
    <property type="evidence" value="ECO:0007669"/>
    <property type="project" value="UniProtKB-UniRule"/>
</dbReference>
<dbReference type="GO" id="GO:0003677">
    <property type="term" value="F:DNA binding"/>
    <property type="evidence" value="ECO:0007669"/>
    <property type="project" value="UniProtKB-KW"/>
</dbReference>
<dbReference type="GO" id="GO:0003700">
    <property type="term" value="F:DNA-binding transcription factor activity"/>
    <property type="evidence" value="ECO:0007669"/>
    <property type="project" value="UniProtKB-UniRule"/>
</dbReference>
<dbReference type="GO" id="GO:0045913">
    <property type="term" value="P:positive regulation of carbohydrate metabolic process"/>
    <property type="evidence" value="ECO:0007669"/>
    <property type="project" value="UniProtKB-UniRule"/>
</dbReference>
<dbReference type="GO" id="GO:0045893">
    <property type="term" value="P:positive regulation of DNA-templated transcription"/>
    <property type="evidence" value="ECO:0007669"/>
    <property type="project" value="UniProtKB-UniRule"/>
</dbReference>
<dbReference type="CDD" id="cd06170">
    <property type="entry name" value="LuxR_C_like"/>
    <property type="match status" value="1"/>
</dbReference>
<dbReference type="FunFam" id="1.10.10.10:FF:000115">
    <property type="entry name" value="HTH-type transcriptional regulator MalT"/>
    <property type="match status" value="1"/>
</dbReference>
<dbReference type="FunFam" id="1.25.40.10:FF:000086">
    <property type="entry name" value="HTH-type transcriptional regulator MalT"/>
    <property type="match status" value="1"/>
</dbReference>
<dbReference type="Gene3D" id="3.40.50.300">
    <property type="entry name" value="P-loop containing nucleotide triphosphate hydrolases"/>
    <property type="match status" value="1"/>
</dbReference>
<dbReference type="Gene3D" id="1.25.40.10">
    <property type="entry name" value="Tetratricopeptide repeat domain"/>
    <property type="match status" value="1"/>
</dbReference>
<dbReference type="Gene3D" id="1.10.10.10">
    <property type="entry name" value="Winged helix-like DNA-binding domain superfamily/Winged helix DNA-binding domain"/>
    <property type="match status" value="1"/>
</dbReference>
<dbReference type="HAMAP" id="MF_01247">
    <property type="entry name" value="HTH_type_MalT"/>
    <property type="match status" value="1"/>
</dbReference>
<dbReference type="InterPro" id="IPR027417">
    <property type="entry name" value="P-loop_NTPase"/>
</dbReference>
<dbReference type="InterPro" id="IPR016032">
    <property type="entry name" value="Sig_transdc_resp-reg_C-effctor"/>
</dbReference>
<dbReference type="InterPro" id="IPR011990">
    <property type="entry name" value="TPR-like_helical_dom_sf"/>
</dbReference>
<dbReference type="InterPro" id="IPR041617">
    <property type="entry name" value="TPR_MalT"/>
</dbReference>
<dbReference type="InterPro" id="IPR023768">
    <property type="entry name" value="Tscrpt_reg_HTH_MalT"/>
</dbReference>
<dbReference type="InterPro" id="IPR000792">
    <property type="entry name" value="Tscrpt_reg_LuxR_C"/>
</dbReference>
<dbReference type="InterPro" id="IPR036388">
    <property type="entry name" value="WH-like_DNA-bd_sf"/>
</dbReference>
<dbReference type="NCBIfam" id="NF003420">
    <property type="entry name" value="PRK04841.1"/>
    <property type="match status" value="1"/>
</dbReference>
<dbReference type="PANTHER" id="PTHR44688">
    <property type="entry name" value="DNA-BINDING TRANSCRIPTIONAL ACTIVATOR DEVR_DOSR"/>
    <property type="match status" value="1"/>
</dbReference>
<dbReference type="PANTHER" id="PTHR44688:SF16">
    <property type="entry name" value="DNA-BINDING TRANSCRIPTIONAL ACTIVATOR DEVR_DOSR"/>
    <property type="match status" value="1"/>
</dbReference>
<dbReference type="Pfam" id="PF00196">
    <property type="entry name" value="GerE"/>
    <property type="match status" value="1"/>
</dbReference>
<dbReference type="Pfam" id="PF17874">
    <property type="entry name" value="TPR_MalT"/>
    <property type="match status" value="1"/>
</dbReference>
<dbReference type="PRINTS" id="PR00038">
    <property type="entry name" value="HTHLUXR"/>
</dbReference>
<dbReference type="SMART" id="SM00421">
    <property type="entry name" value="HTH_LUXR"/>
    <property type="match status" value="1"/>
</dbReference>
<dbReference type="SUPFAM" id="SSF46894">
    <property type="entry name" value="C-terminal effector domain of the bipartite response regulators"/>
    <property type="match status" value="1"/>
</dbReference>
<dbReference type="SUPFAM" id="SSF52540">
    <property type="entry name" value="P-loop containing nucleoside triphosphate hydrolases"/>
    <property type="match status" value="1"/>
</dbReference>
<dbReference type="SUPFAM" id="SSF48452">
    <property type="entry name" value="TPR-like"/>
    <property type="match status" value="1"/>
</dbReference>
<dbReference type="PROSITE" id="PS00622">
    <property type="entry name" value="HTH_LUXR_1"/>
    <property type="match status" value="1"/>
</dbReference>
<dbReference type="PROSITE" id="PS50043">
    <property type="entry name" value="HTH_LUXR_2"/>
    <property type="match status" value="1"/>
</dbReference>
<reference key="1">
    <citation type="submission" date="2008-02" db="EMBL/GenBank/DDBJ databases">
        <title>Complete sequence of Escherichia coli C str. ATCC 8739.</title>
        <authorList>
            <person name="Copeland A."/>
            <person name="Lucas S."/>
            <person name="Lapidus A."/>
            <person name="Glavina del Rio T."/>
            <person name="Dalin E."/>
            <person name="Tice H."/>
            <person name="Bruce D."/>
            <person name="Goodwin L."/>
            <person name="Pitluck S."/>
            <person name="Kiss H."/>
            <person name="Brettin T."/>
            <person name="Detter J.C."/>
            <person name="Han C."/>
            <person name="Kuske C.R."/>
            <person name="Schmutz J."/>
            <person name="Larimer F."/>
            <person name="Land M."/>
            <person name="Hauser L."/>
            <person name="Kyrpides N."/>
            <person name="Mikhailova N."/>
            <person name="Ingram L."/>
            <person name="Richardson P."/>
        </authorList>
    </citation>
    <scope>NUCLEOTIDE SEQUENCE [LARGE SCALE GENOMIC DNA]</scope>
    <source>
        <strain>ATCC 8739 / DSM 1576 / NBRC 3972 / NCIMB 8545 / WDCM 00012 / Crooks</strain>
    </source>
</reference>
<accession>B1IP47</accession>
<sequence length="901" mass="103188">MLIPSKLSRPVRLDHTVVRERLLAKLSGANNFRLALITSPAGYGKTTLISQWAAGKNDIGWYSLDEGDNQQERFASYLIAAVQQATNGHCAICETMAQKRQYASLTSLFAQLFIELAEWHSPLYLVIDDYHLITNPVIHESMRFFIRHQPENLTLVVLSRNLPQLGIANLRVRDQLLEIGSQQLAFTHQEAKQFFDCRLSSPIEAAESSRICDDVSGWATALQLIALSARQNTHSAHKSARRLAGINASHLSDYLVDEVLDNVDLATRHFLLKSAILRSMNDALITRVTGEENGQMRLEEIERQGLFLQRMDDTGEWFCYHPLFGNFLRQRCQWELAAELPEIHRAAAESWMAQGFPSEAIHHALAAGDALMLRDILLNHAWSLFNHSELSLLEESLKALPWDSLLENPQLVLLQAWLMQSQHRYGEVNTLLARAEHEIKDIREDTMHAEFNALRAQVAINDGNPDEAERLAKLALEELPPGWFYSRIVATSVLGEVLHCKGELTRSLALMQQTEQMARQHDVWHYALWSLIQQSEILFAQGFLQTAWETQEKAFQLINEQHLEQLPMHEFLVRIRAQLLWAWARLDEAEASARRGIEVLSSYQPQQQLQCLAMLIQCSLARGDLDNARSQLNRLENLLGNGKYHSDWISNANKVRVIYWQMTGDKAAAANWLRHTAKPEFANNHFLQGQWRNIARAQILLGEFEPAEIVLEELNENARSLRLMSDLNRNLLLLNQLYWQAGRKSDAQRVLLDALKLANRTGFISHFVIEGEAMAQQLRQLIQLNTLPELEQHRAQRILREINQHHRHKFAHFDENFVERLLNHPEVPELIRTSPLTQREWQVLGLIYSGYSNEQIAGELEVAATTIKTHIRNLYQKLGVAHRQDAVQHAQQLLKMMGYGV</sequence>
<proteinExistence type="inferred from homology"/>
<comment type="function">
    <text evidence="1">Positively regulates the transcription of the maltose regulon whose gene products are responsible for uptake and catabolism of malto-oligosaccharides. Specifically binds to the promoter region of its target genes, recognizing a short DNA motif called the MalT box.</text>
</comment>
<comment type="activity regulation">
    <text evidence="1">Activated by ATP and maltotriose, which are both required for DNA binding.</text>
</comment>
<comment type="subunit">
    <text evidence="1">Monomer in solution. Oligomerizes to an active state in the presence of the positive effectors ATP and maltotriose.</text>
</comment>
<comment type="similarity">
    <text evidence="1">Belongs to the MalT family.</text>
</comment>
<evidence type="ECO:0000255" key="1">
    <source>
        <dbReference type="HAMAP-Rule" id="MF_01247"/>
    </source>
</evidence>